<evidence type="ECO:0000250" key="1">
    <source>
        <dbReference type="UniProtKB" id="P23804"/>
    </source>
</evidence>
<evidence type="ECO:0000250" key="2">
    <source>
        <dbReference type="UniProtKB" id="Q00987"/>
    </source>
</evidence>
<evidence type="ECO:0000255" key="3"/>
<evidence type="ECO:0000255" key="4">
    <source>
        <dbReference type="PROSITE-ProRule" id="PRU00175"/>
    </source>
</evidence>
<evidence type="ECO:0000255" key="5">
    <source>
        <dbReference type="PROSITE-ProRule" id="PRU00322"/>
    </source>
</evidence>
<evidence type="ECO:0000255" key="6">
    <source>
        <dbReference type="PROSITE-ProRule" id="PRU01273"/>
    </source>
</evidence>
<evidence type="ECO:0000256" key="7">
    <source>
        <dbReference type="SAM" id="MobiDB-lite"/>
    </source>
</evidence>
<evidence type="ECO:0000305" key="8"/>
<evidence type="ECO:0007829" key="9">
    <source>
        <dbReference type="PDB" id="1YCQ"/>
    </source>
</evidence>
<evidence type="ECO:0007829" key="10">
    <source>
        <dbReference type="PDB" id="4J74"/>
    </source>
</evidence>
<evidence type="ECO:0007829" key="11">
    <source>
        <dbReference type="PDB" id="4JRG"/>
    </source>
</evidence>
<evidence type="ECO:0007829" key="12">
    <source>
        <dbReference type="PDB" id="4LWU"/>
    </source>
</evidence>
<organism>
    <name type="scientific">Xenopus laevis</name>
    <name type="common">African clawed frog</name>
    <dbReference type="NCBI Taxonomy" id="8355"/>
    <lineage>
        <taxon>Eukaryota</taxon>
        <taxon>Metazoa</taxon>
        <taxon>Chordata</taxon>
        <taxon>Craniata</taxon>
        <taxon>Vertebrata</taxon>
        <taxon>Euteleostomi</taxon>
        <taxon>Amphibia</taxon>
        <taxon>Batrachia</taxon>
        <taxon>Anura</taxon>
        <taxon>Pipoidea</taxon>
        <taxon>Pipidae</taxon>
        <taxon>Xenopodinae</taxon>
        <taxon>Xenopus</taxon>
        <taxon>Xenopus</taxon>
    </lineage>
</organism>
<feature type="chain" id="PRO_0000157334" description="E3 ubiquitin-protein ligase Mdm2">
    <location>
        <begin position="1"/>
        <end position="473"/>
    </location>
</feature>
<feature type="domain" description="SWIB/MDM2" evidence="6">
    <location>
        <begin position="22"/>
        <end position="105"/>
    </location>
</feature>
<feature type="zinc finger region" description="RanBP2-type" evidence="5">
    <location>
        <begin position="290"/>
        <end position="319"/>
    </location>
</feature>
<feature type="zinc finger region" description="RING-type" evidence="4">
    <location>
        <begin position="420"/>
        <end position="461"/>
    </location>
</feature>
<feature type="region of interest" description="Disordered" evidence="7">
    <location>
        <begin position="140"/>
        <end position="181"/>
    </location>
</feature>
<feature type="region of interest" description="Disordered" evidence="7">
    <location>
        <begin position="205"/>
        <end position="285"/>
    </location>
</feature>
<feature type="region of interest" description="Region II">
    <location>
        <begin position="230"/>
        <end position="322"/>
    </location>
</feature>
<feature type="region of interest" description="Disordered" evidence="7">
    <location>
        <begin position="348"/>
        <end position="411"/>
    </location>
</feature>
<feature type="short sequence motif" description="Nuclear localization signal" evidence="3">
    <location>
        <begin position="173"/>
        <end position="179"/>
    </location>
</feature>
<feature type="compositionally biased region" description="Low complexity" evidence="7">
    <location>
        <begin position="206"/>
        <end position="215"/>
    </location>
</feature>
<feature type="compositionally biased region" description="Basic and acidic residues" evidence="7">
    <location>
        <begin position="216"/>
        <end position="231"/>
    </location>
</feature>
<feature type="compositionally biased region" description="Acidic residues" evidence="7">
    <location>
        <begin position="273"/>
        <end position="285"/>
    </location>
</feature>
<feature type="compositionally biased region" description="Polar residues" evidence="7">
    <location>
        <begin position="370"/>
        <end position="397"/>
    </location>
</feature>
<feature type="compositionally biased region" description="Basic and acidic residues" evidence="7">
    <location>
        <begin position="398"/>
        <end position="408"/>
    </location>
</feature>
<feature type="strand" evidence="11">
    <location>
        <begin position="24"/>
        <end position="26"/>
    </location>
</feature>
<feature type="helix" evidence="12">
    <location>
        <begin position="28"/>
        <end position="36"/>
    </location>
</feature>
<feature type="helix" evidence="12">
    <location>
        <begin position="46"/>
        <end position="59"/>
    </location>
</feature>
<feature type="strand" evidence="10">
    <location>
        <begin position="65"/>
        <end position="67"/>
    </location>
</feature>
<feature type="strand" evidence="12">
    <location>
        <begin position="70"/>
        <end position="72"/>
    </location>
</feature>
<feature type="helix" evidence="12">
    <location>
        <begin position="77"/>
        <end position="82"/>
    </location>
</feature>
<feature type="strand" evidence="12">
    <location>
        <begin position="85"/>
        <end position="88"/>
    </location>
</feature>
<feature type="helix" evidence="12">
    <location>
        <begin position="92"/>
        <end position="100"/>
    </location>
</feature>
<feature type="strand" evidence="9">
    <location>
        <begin position="103"/>
        <end position="106"/>
    </location>
</feature>
<comment type="function">
    <text evidence="2">E3 ubiquitin-protein ligase that mediates ubiquitination of p53/TP53, leading to its degradation by the proteasome.</text>
</comment>
<comment type="catalytic activity">
    <reaction evidence="2">
        <text>S-ubiquitinyl-[E2 ubiquitin-conjugating enzyme]-L-cysteine + [acceptor protein]-L-lysine = [E2 ubiquitin-conjugating enzyme]-L-cysteine + N(6)-ubiquitinyl-[acceptor protein]-L-lysine.</text>
        <dbReference type="EC" id="2.3.2.27"/>
    </reaction>
</comment>
<comment type="subcellular location">
    <subcellularLocation>
        <location evidence="1">Nucleus</location>
        <location evidence="1">Nucleoplasm</location>
    </subcellularLocation>
    <subcellularLocation>
        <location evidence="1">Cytoplasm</location>
    </subcellularLocation>
    <subcellularLocation>
        <location evidence="1">Nucleus</location>
        <location evidence="1">Nucleolus</location>
    </subcellularLocation>
    <subcellularLocation>
        <location evidence="2">Nucleus</location>
    </subcellularLocation>
</comment>
<comment type="developmental stage">
    <text>Expression increases from oocyte stage I/II to reach its maximum in oocyte stage v/vi in unfertilized eggs, and then progressively decreases to become undetectable at the gastrula stage.</text>
</comment>
<comment type="similarity">
    <text evidence="8">Belongs to the MDM2/MDM4 family.</text>
</comment>
<keyword id="KW-0002">3D-structure</keyword>
<keyword id="KW-0963">Cytoplasm</keyword>
<keyword id="KW-0479">Metal-binding</keyword>
<keyword id="KW-0539">Nucleus</keyword>
<keyword id="KW-1185">Reference proteome</keyword>
<keyword id="KW-0808">Transferase</keyword>
<keyword id="KW-0833">Ubl conjugation pathway</keyword>
<keyword id="KW-0862">Zinc</keyword>
<keyword id="KW-0863">Zinc-finger</keyword>
<name>MDM2_XENLA</name>
<gene>
    <name type="primary">mdm2</name>
</gene>
<sequence length="473" mass="53464">MNLTSTTNCLENNHISTSDQEKLVQPTPLLLSLLKSAGAQKETFTMKEVIYHLGQYIMAKQLYDEKQQHIVHCSNDPLGELFGVQEFSVKEPRRLYAMISRNLVSANVKESSEDIFGNVCCFPDKQSSQKEKLQELPDKLIAPASDSKPCNLSQRKSSNETEEISSVDHPAEQQRKRHKSDSFSLTFDESLSWWVISGLRCDRNSSESTDSSSNSDPERHSTNDNSEHDSDQFSVEFEVESVCSDDYSPSGDEHGVSEEEEINDEVYQVTIYETEESETDSFDVDTEISEADYWKCPECGEVNPPLPSYCPRCWTVRKDWLPEQRRKEPPPSKRKLLEIEEDEGFDVPDCKKSKLTSSQDTNVDKKEAENIQNSESQETEDCSQPSTSGSIASCSQEVTKEDSSKESMESSLPLTSIDPCVICQTRPKNGCIVHGRTGHLMACYTCAKKLKKRNKPCPVCREPIQMIVLTYFS</sequence>
<proteinExistence type="evidence at protein level"/>
<dbReference type="EC" id="2.3.2.27"/>
<dbReference type="PDB" id="1TTV">
    <property type="method" value="NMR"/>
    <property type="chains" value="A=13-119"/>
</dbReference>
<dbReference type="PDB" id="1YCQ">
    <property type="method" value="X-ray"/>
    <property type="resolution" value="2.30 A"/>
    <property type="chains" value="A=13-119"/>
</dbReference>
<dbReference type="PDB" id="4IPF">
    <property type="method" value="X-ray"/>
    <property type="resolution" value="1.70 A"/>
    <property type="chains" value="A=21-105"/>
</dbReference>
<dbReference type="PDB" id="4J3E">
    <property type="method" value="X-ray"/>
    <property type="resolution" value="1.91 A"/>
    <property type="chains" value="A=21-105"/>
</dbReference>
<dbReference type="PDB" id="4J74">
    <property type="method" value="X-ray"/>
    <property type="resolution" value="1.20 A"/>
    <property type="chains" value="A=21-105"/>
</dbReference>
<dbReference type="PDB" id="4J7D">
    <property type="method" value="X-ray"/>
    <property type="resolution" value="1.25 A"/>
    <property type="chains" value="A=21-105"/>
</dbReference>
<dbReference type="PDB" id="4J7E">
    <property type="method" value="X-ray"/>
    <property type="resolution" value="1.63 A"/>
    <property type="chains" value="A=21-105"/>
</dbReference>
<dbReference type="PDB" id="4JRG">
    <property type="method" value="X-ray"/>
    <property type="resolution" value="1.90 A"/>
    <property type="chains" value="A/B=21-105"/>
</dbReference>
<dbReference type="PDB" id="4JSC">
    <property type="method" value="X-ray"/>
    <property type="resolution" value="2.50 A"/>
    <property type="chains" value="A/B=21-105"/>
</dbReference>
<dbReference type="PDB" id="4LWT">
    <property type="method" value="X-ray"/>
    <property type="resolution" value="1.60 A"/>
    <property type="chains" value="A=21-105"/>
</dbReference>
<dbReference type="PDB" id="4LWU">
    <property type="method" value="X-ray"/>
    <property type="resolution" value="1.14 A"/>
    <property type="chains" value="A=21-105"/>
</dbReference>
<dbReference type="PDB" id="4LWV">
    <property type="method" value="X-ray"/>
    <property type="resolution" value="2.32 A"/>
    <property type="chains" value="A/B/C=21-105"/>
</dbReference>
<dbReference type="PDBsum" id="1TTV"/>
<dbReference type="PDBsum" id="1YCQ"/>
<dbReference type="PDBsum" id="4IPF"/>
<dbReference type="PDBsum" id="4J3E"/>
<dbReference type="PDBsum" id="4J74"/>
<dbReference type="PDBsum" id="4J7D"/>
<dbReference type="PDBsum" id="4J7E"/>
<dbReference type="PDBsum" id="4JRG"/>
<dbReference type="PDBsum" id="4JSC"/>
<dbReference type="PDBsum" id="4LWT"/>
<dbReference type="PDBsum" id="4LWU"/>
<dbReference type="PDBsum" id="4LWV"/>
<dbReference type="BMRB" id="P56273"/>
<dbReference type="SMR" id="P56273"/>
<dbReference type="IntAct" id="P56273">
    <property type="interactions" value="1"/>
</dbReference>
<dbReference type="EvolutionaryTrace" id="P56273"/>
<dbReference type="Proteomes" id="UP000186698">
    <property type="component" value="Unplaced"/>
</dbReference>
<dbReference type="GO" id="GO:0005737">
    <property type="term" value="C:cytoplasm"/>
    <property type="evidence" value="ECO:0000250"/>
    <property type="project" value="UniProtKB"/>
</dbReference>
<dbReference type="GO" id="GO:0005730">
    <property type="term" value="C:nucleolus"/>
    <property type="evidence" value="ECO:0007669"/>
    <property type="project" value="UniProtKB-SubCell"/>
</dbReference>
<dbReference type="GO" id="GO:0005654">
    <property type="term" value="C:nucleoplasm"/>
    <property type="evidence" value="ECO:0007669"/>
    <property type="project" value="UniProtKB-SubCell"/>
</dbReference>
<dbReference type="GO" id="GO:0005634">
    <property type="term" value="C:nucleus"/>
    <property type="evidence" value="ECO:0000250"/>
    <property type="project" value="UniProtKB"/>
</dbReference>
<dbReference type="GO" id="GO:0042802">
    <property type="term" value="F:identical protein binding"/>
    <property type="evidence" value="ECO:0007669"/>
    <property type="project" value="InterPro"/>
</dbReference>
<dbReference type="GO" id="GO:0002039">
    <property type="term" value="F:p53 binding"/>
    <property type="evidence" value="ECO:0007669"/>
    <property type="project" value="TreeGrafter"/>
</dbReference>
<dbReference type="GO" id="GO:0061630">
    <property type="term" value="F:ubiquitin protein ligase activity"/>
    <property type="evidence" value="ECO:0000318"/>
    <property type="project" value="GO_Central"/>
</dbReference>
<dbReference type="GO" id="GO:0008270">
    <property type="term" value="F:zinc ion binding"/>
    <property type="evidence" value="ECO:0007669"/>
    <property type="project" value="UniProtKB-KW"/>
</dbReference>
<dbReference type="GO" id="GO:0006915">
    <property type="term" value="P:apoptotic process"/>
    <property type="evidence" value="ECO:0000250"/>
    <property type="project" value="UniProtKB"/>
</dbReference>
<dbReference type="GO" id="GO:0043066">
    <property type="term" value="P:negative regulation of apoptotic process"/>
    <property type="evidence" value="ECO:0000318"/>
    <property type="project" value="GO_Central"/>
</dbReference>
<dbReference type="GO" id="GO:0045931">
    <property type="term" value="P:positive regulation of mitotic cell cycle"/>
    <property type="evidence" value="ECO:0000318"/>
    <property type="project" value="GO_Central"/>
</dbReference>
<dbReference type="GO" id="GO:0016567">
    <property type="term" value="P:protein ubiquitination"/>
    <property type="evidence" value="ECO:0007669"/>
    <property type="project" value="TreeGrafter"/>
</dbReference>
<dbReference type="GO" id="GO:0065008">
    <property type="term" value="P:regulation of biological quality"/>
    <property type="evidence" value="ECO:0007669"/>
    <property type="project" value="UniProtKB-ARBA"/>
</dbReference>
<dbReference type="GO" id="GO:0010468">
    <property type="term" value="P:regulation of gene expression"/>
    <property type="evidence" value="ECO:0007669"/>
    <property type="project" value="TreeGrafter"/>
</dbReference>
<dbReference type="GO" id="GO:0006511">
    <property type="term" value="P:ubiquitin-dependent protein catabolic process"/>
    <property type="evidence" value="ECO:0000318"/>
    <property type="project" value="GO_Central"/>
</dbReference>
<dbReference type="CDD" id="cd17672">
    <property type="entry name" value="MDM2"/>
    <property type="match status" value="1"/>
</dbReference>
<dbReference type="CDD" id="cd16783">
    <property type="entry name" value="mRING-HC-C2H2C4_MDM2"/>
    <property type="match status" value="1"/>
</dbReference>
<dbReference type="FunFam" id="3.30.40.10:FF:000076">
    <property type="entry name" value="E3 ubiquitin-protein ligase Mdm2"/>
    <property type="match status" value="1"/>
</dbReference>
<dbReference type="Gene3D" id="1.10.245.10">
    <property type="entry name" value="SWIB/MDM2 domain"/>
    <property type="match status" value="1"/>
</dbReference>
<dbReference type="Gene3D" id="3.30.40.10">
    <property type="entry name" value="Zinc/RING finger domain, C3HC4 (zinc finger)"/>
    <property type="match status" value="1"/>
</dbReference>
<dbReference type="Gene3D" id="2.30.30.380">
    <property type="entry name" value="Zn-finger domain of Sec23/24"/>
    <property type="match status" value="1"/>
</dbReference>
<dbReference type="IDEAL" id="IID50077"/>
<dbReference type="InterPro" id="IPR028340">
    <property type="entry name" value="Mdm2"/>
</dbReference>
<dbReference type="InterPro" id="IPR044080">
    <property type="entry name" value="MDM2_mRING-HC-C2H2C4"/>
</dbReference>
<dbReference type="InterPro" id="IPR016495">
    <property type="entry name" value="p53_neg-reg_MDM_2/4"/>
</dbReference>
<dbReference type="InterPro" id="IPR036885">
    <property type="entry name" value="SWIB_MDM2_dom_sf"/>
</dbReference>
<dbReference type="InterPro" id="IPR003121">
    <property type="entry name" value="SWIB_MDM2_domain"/>
</dbReference>
<dbReference type="InterPro" id="IPR001876">
    <property type="entry name" value="Znf_RanBP2"/>
</dbReference>
<dbReference type="InterPro" id="IPR036443">
    <property type="entry name" value="Znf_RanBP2_sf"/>
</dbReference>
<dbReference type="InterPro" id="IPR001841">
    <property type="entry name" value="Znf_RING"/>
</dbReference>
<dbReference type="InterPro" id="IPR013083">
    <property type="entry name" value="Znf_RING/FYVE/PHD"/>
</dbReference>
<dbReference type="PANTHER" id="PTHR46858:SF13">
    <property type="entry name" value="E3 UBIQUITIN-PROTEIN LIGASE MDM2"/>
    <property type="match status" value="1"/>
</dbReference>
<dbReference type="PANTHER" id="PTHR46858">
    <property type="entry name" value="OS05G0521000 PROTEIN"/>
    <property type="match status" value="1"/>
</dbReference>
<dbReference type="Pfam" id="PF02201">
    <property type="entry name" value="SWIB"/>
    <property type="match status" value="1"/>
</dbReference>
<dbReference type="Pfam" id="PF13920">
    <property type="entry name" value="zf-C3HC4_3"/>
    <property type="match status" value="1"/>
</dbReference>
<dbReference type="Pfam" id="PF00641">
    <property type="entry name" value="Zn_ribbon_RanBP"/>
    <property type="match status" value="1"/>
</dbReference>
<dbReference type="PIRSF" id="PIRSF500700">
    <property type="entry name" value="MDM2"/>
    <property type="match status" value="1"/>
</dbReference>
<dbReference type="PIRSF" id="PIRSF006748">
    <property type="entry name" value="p53_MDM_2/4"/>
    <property type="match status" value="1"/>
</dbReference>
<dbReference type="SUPFAM" id="SSF90209">
    <property type="entry name" value="Ran binding protein zinc finger-like"/>
    <property type="match status" value="1"/>
</dbReference>
<dbReference type="SUPFAM" id="SSF57850">
    <property type="entry name" value="RING/U-box"/>
    <property type="match status" value="1"/>
</dbReference>
<dbReference type="SUPFAM" id="SSF47592">
    <property type="entry name" value="SWIB/MDM2 domain"/>
    <property type="match status" value="2"/>
</dbReference>
<dbReference type="PROSITE" id="PS51925">
    <property type="entry name" value="SWIB_MDM2"/>
    <property type="match status" value="1"/>
</dbReference>
<dbReference type="PROSITE" id="PS01358">
    <property type="entry name" value="ZF_RANBP2_1"/>
    <property type="match status" value="1"/>
</dbReference>
<dbReference type="PROSITE" id="PS50199">
    <property type="entry name" value="ZF_RANBP2_2"/>
    <property type="match status" value="1"/>
</dbReference>
<dbReference type="PROSITE" id="PS50089">
    <property type="entry name" value="ZF_RING_2"/>
    <property type="match status" value="1"/>
</dbReference>
<protein>
    <recommendedName>
        <fullName>E3 ubiquitin-protein ligase Mdm2</fullName>
        <ecNumber>2.3.2.27</ecNumber>
    </recommendedName>
    <alternativeName>
        <fullName>Double minute 2 protein</fullName>
        <shortName>Xdm2</shortName>
    </alternativeName>
    <alternativeName>
        <fullName evidence="8">RING-type E3 ubiquitin transferase Mdm2</fullName>
    </alternativeName>
    <alternativeName>
        <fullName>p53-binding protein Mdm2</fullName>
    </alternativeName>
</protein>
<reference key="1">
    <citation type="journal article" date="1997" name="Oncogene">
        <title>Conservation of structural domains and biochemical activities of the MDM2 protein from Xenopus laevis.</title>
        <authorList>
            <person name="Marechal V."/>
            <person name="Elenbaas B."/>
            <person name="Taneyhill L."/>
            <person name="Piette J."/>
            <person name="Mechali M."/>
            <person name="Nicolas J.-C."/>
            <person name="Levine A.J."/>
            <person name="Moreau J."/>
        </authorList>
    </citation>
    <scope>NUCLEOTIDE SEQUENCE</scope>
</reference>
<reference key="2">
    <citation type="journal article" date="1996" name="Science">
        <title>Structure of the MDM2 oncoprotein bound to the p53 tumor suppressor transactivation domain.</title>
        <authorList>
            <person name="Kussie P.H."/>
            <person name="Gorina S."/>
            <person name="Marechal V."/>
            <person name="Elenbaas B."/>
            <person name="Moreau J."/>
            <person name="Levine A.J."/>
            <person name="Pavletich N.P."/>
        </authorList>
    </citation>
    <scope>X-RAY CRYSTALLOGRAPHY (2.3 ANGSTROMS) OF 13-119 IN COMPLEX WITH P53</scope>
</reference>
<accession>P56273</accession>